<accession>B2K4I1</accession>
<sequence length="264" mass="30293">MSKLKLHGFNNLTKSLSFCIYDICYAKTADDRDGYIAYIDEQYNANRLTEILSETCSIIGANILNIARQDYDPQGASVTILVSEEPVDPRDVDTSEHPGPLPSAVVAHLDKSHICVHTYPESHPEAGLCTFRADIEVSTCGVISPLKALNYLIHQLESDIVTMDYRVRGFTRDINGVKHFIDHKINSIQNFMSDDMKSLYHMMDVNVYQENIFHTKMMLKDFDLKHYLFNAKPEELSAEEKEQITRLLYKEMQEIYYGRNVPEV</sequence>
<dbReference type="EC" id="4.1.1.50" evidence="1"/>
<dbReference type="EMBL" id="CP001048">
    <property type="protein sequence ID" value="ACC87734.1"/>
    <property type="molecule type" value="Genomic_DNA"/>
</dbReference>
<dbReference type="RefSeq" id="WP_002209337.1">
    <property type="nucleotide sequence ID" value="NZ_CP009780.1"/>
</dbReference>
<dbReference type="SMR" id="B2K4I1"/>
<dbReference type="GeneID" id="57975297"/>
<dbReference type="KEGG" id="ypb:YPTS_0750"/>
<dbReference type="PATRIC" id="fig|502801.10.peg.80"/>
<dbReference type="UniPathway" id="UPA00331">
    <property type="reaction ID" value="UER00451"/>
</dbReference>
<dbReference type="GO" id="GO:0005829">
    <property type="term" value="C:cytosol"/>
    <property type="evidence" value="ECO:0007669"/>
    <property type="project" value="TreeGrafter"/>
</dbReference>
<dbReference type="GO" id="GO:0004014">
    <property type="term" value="F:adenosylmethionine decarboxylase activity"/>
    <property type="evidence" value="ECO:0007669"/>
    <property type="project" value="UniProtKB-UniRule"/>
</dbReference>
<dbReference type="GO" id="GO:0008295">
    <property type="term" value="P:spermidine biosynthetic process"/>
    <property type="evidence" value="ECO:0007669"/>
    <property type="project" value="UniProtKB-UniRule"/>
</dbReference>
<dbReference type="FunFam" id="3.60.90.10:FF:000001">
    <property type="entry name" value="S-adenosylmethionine decarboxylase proenzyme"/>
    <property type="match status" value="1"/>
</dbReference>
<dbReference type="Gene3D" id="3.60.90.10">
    <property type="entry name" value="S-adenosylmethionine decarboxylase"/>
    <property type="match status" value="1"/>
</dbReference>
<dbReference type="HAMAP" id="MF_00465">
    <property type="entry name" value="AdoMetDC_2"/>
    <property type="match status" value="1"/>
</dbReference>
<dbReference type="InterPro" id="IPR003826">
    <property type="entry name" value="AdoMetDC_fam_prok"/>
</dbReference>
<dbReference type="InterPro" id="IPR009165">
    <property type="entry name" value="S-AdoMet_deCO2ase_bac"/>
</dbReference>
<dbReference type="InterPro" id="IPR016067">
    <property type="entry name" value="S-AdoMet_deCO2ase_core"/>
</dbReference>
<dbReference type="NCBIfam" id="TIGR03331">
    <property type="entry name" value="SAM_DCase_Eco"/>
    <property type="match status" value="1"/>
</dbReference>
<dbReference type="PANTHER" id="PTHR33866">
    <property type="entry name" value="S-ADENOSYLMETHIONINE DECARBOXYLASE PROENZYME"/>
    <property type="match status" value="1"/>
</dbReference>
<dbReference type="PANTHER" id="PTHR33866:SF1">
    <property type="entry name" value="S-ADENOSYLMETHIONINE DECARBOXYLASE PROENZYME"/>
    <property type="match status" value="1"/>
</dbReference>
<dbReference type="Pfam" id="PF02675">
    <property type="entry name" value="AdoMet_dc"/>
    <property type="match status" value="1"/>
</dbReference>
<dbReference type="PIRSF" id="PIRSF001356">
    <property type="entry name" value="SAM_decarboxylas"/>
    <property type="match status" value="1"/>
</dbReference>
<dbReference type="SUPFAM" id="SSF56276">
    <property type="entry name" value="S-adenosylmethionine decarboxylase"/>
    <property type="match status" value="1"/>
</dbReference>
<feature type="chain" id="PRO_0000364429" description="S-adenosylmethionine decarboxylase beta chain" evidence="1">
    <location>
        <begin position="1"/>
        <end position="111"/>
    </location>
</feature>
<feature type="chain" id="PRO_0000364430" description="S-adenosylmethionine decarboxylase alpha chain" evidence="1">
    <location>
        <begin position="112"/>
        <end position="264"/>
    </location>
</feature>
<feature type="active site" description="Schiff-base intermediate with substrate; via pyruvic acid" evidence="1">
    <location>
        <position position="112"/>
    </location>
</feature>
<feature type="active site" description="Proton acceptor; for processing activity" evidence="1">
    <location>
        <position position="117"/>
    </location>
</feature>
<feature type="active site" description="Proton donor; for catalytic activity" evidence="1">
    <location>
        <position position="140"/>
    </location>
</feature>
<feature type="site" description="Cleavage (non-hydrolytic); by autolysis" evidence="1">
    <location>
        <begin position="111"/>
        <end position="112"/>
    </location>
</feature>
<feature type="modified residue" description="Pyruvic acid (Ser); by autocatalysis" evidence="1">
    <location>
        <position position="112"/>
    </location>
</feature>
<organism>
    <name type="scientific">Yersinia pseudotuberculosis serotype IB (strain PB1/+)</name>
    <dbReference type="NCBI Taxonomy" id="502801"/>
    <lineage>
        <taxon>Bacteria</taxon>
        <taxon>Pseudomonadati</taxon>
        <taxon>Pseudomonadota</taxon>
        <taxon>Gammaproteobacteria</taxon>
        <taxon>Enterobacterales</taxon>
        <taxon>Yersiniaceae</taxon>
        <taxon>Yersinia</taxon>
    </lineage>
</organism>
<evidence type="ECO:0000255" key="1">
    <source>
        <dbReference type="HAMAP-Rule" id="MF_00465"/>
    </source>
</evidence>
<keyword id="KW-0068">Autocatalytic cleavage</keyword>
<keyword id="KW-0210">Decarboxylase</keyword>
<keyword id="KW-0456">Lyase</keyword>
<keyword id="KW-0620">Polyamine biosynthesis</keyword>
<keyword id="KW-0670">Pyruvate</keyword>
<keyword id="KW-0949">S-adenosyl-L-methionine</keyword>
<keyword id="KW-0704">Schiff base</keyword>
<keyword id="KW-0745">Spermidine biosynthesis</keyword>
<keyword id="KW-0865">Zymogen</keyword>
<comment type="function">
    <text evidence="1">Catalyzes the decarboxylation of S-adenosylmethionine to S-adenosylmethioninamine (dcAdoMet), the propylamine donor required for the synthesis of the polyamines spermine and spermidine from the diamine putrescine.</text>
</comment>
<comment type="catalytic activity">
    <reaction evidence="1">
        <text>S-adenosyl-L-methionine + H(+) = S-adenosyl 3-(methylsulfanyl)propylamine + CO2</text>
        <dbReference type="Rhea" id="RHEA:15981"/>
        <dbReference type="ChEBI" id="CHEBI:15378"/>
        <dbReference type="ChEBI" id="CHEBI:16526"/>
        <dbReference type="ChEBI" id="CHEBI:57443"/>
        <dbReference type="ChEBI" id="CHEBI:59789"/>
        <dbReference type="EC" id="4.1.1.50"/>
    </reaction>
</comment>
<comment type="cofactor">
    <cofactor evidence="1">
        <name>pyruvate</name>
        <dbReference type="ChEBI" id="CHEBI:15361"/>
    </cofactor>
    <text evidence="1">Binds 1 pyruvoyl group covalently per subunit.</text>
</comment>
<comment type="pathway">
    <text evidence="1">Amine and polyamine biosynthesis; S-adenosylmethioninamine biosynthesis; S-adenosylmethioninamine from S-adenosyl-L-methionine: step 1/1.</text>
</comment>
<comment type="subunit">
    <text evidence="1">Heterooctamer of four alpha and four beta chains arranged as a tetramer of alpha/beta heterodimers.</text>
</comment>
<comment type="PTM">
    <text evidence="1">Is synthesized initially as an inactive proenzyme. Formation of the active enzyme involves a self-maturation process in which the active site pyruvoyl group is generated from an internal serine residue via an autocatalytic post-translational modification. Two non-identical subunits are generated from the proenzyme in this reaction, and the pyruvate is formed at the N-terminus of the alpha chain, which is derived from the carboxyl end of the proenzyme. The post-translation cleavage follows an unusual pathway, termed non-hydrolytic serinolysis, in which the side chain hydroxyl group of the serine supplies its oxygen atom to form the C-terminus of the beta chain, while the remainder of the serine residue undergoes an oxidative deamination to produce ammonia and the pyruvoyl group blocking the N-terminus of the alpha chain.</text>
</comment>
<comment type="similarity">
    <text evidence="1">Belongs to the prokaryotic AdoMetDC family. Type 2 subfamily.</text>
</comment>
<gene>
    <name evidence="1" type="primary">speD</name>
    <name type="ordered locus">YPTS_0750</name>
</gene>
<reference key="1">
    <citation type="submission" date="2008-04" db="EMBL/GenBank/DDBJ databases">
        <title>Complete sequence of Yersinia pseudotuberculosis PB1/+.</title>
        <authorList>
            <person name="Copeland A."/>
            <person name="Lucas S."/>
            <person name="Lapidus A."/>
            <person name="Glavina del Rio T."/>
            <person name="Dalin E."/>
            <person name="Tice H."/>
            <person name="Bruce D."/>
            <person name="Goodwin L."/>
            <person name="Pitluck S."/>
            <person name="Munk A.C."/>
            <person name="Brettin T."/>
            <person name="Detter J.C."/>
            <person name="Han C."/>
            <person name="Tapia R."/>
            <person name="Schmutz J."/>
            <person name="Larimer F."/>
            <person name="Land M."/>
            <person name="Hauser L."/>
            <person name="Challacombe J.F."/>
            <person name="Green L."/>
            <person name="Lindler L.E."/>
            <person name="Nikolich M.P."/>
            <person name="Richardson P."/>
        </authorList>
    </citation>
    <scope>NUCLEOTIDE SEQUENCE [LARGE SCALE GENOMIC DNA]</scope>
    <source>
        <strain>PB1/+</strain>
    </source>
</reference>
<proteinExistence type="inferred from homology"/>
<name>SPED_YERPB</name>
<protein>
    <recommendedName>
        <fullName evidence="1">S-adenosylmethionine decarboxylase proenzyme</fullName>
        <shortName evidence="1">AdoMetDC</shortName>
        <shortName evidence="1">SAMDC</shortName>
        <ecNumber evidence="1">4.1.1.50</ecNumber>
    </recommendedName>
    <component>
        <recommendedName>
            <fullName evidence="1">S-adenosylmethionine decarboxylase beta chain</fullName>
        </recommendedName>
    </component>
    <component>
        <recommendedName>
            <fullName evidence="1">S-adenosylmethionine decarboxylase alpha chain</fullName>
        </recommendedName>
    </component>
</protein>